<dbReference type="EC" id="2.1.2.1" evidence="1"/>
<dbReference type="EMBL" id="CP000513">
    <property type="protein sequence ID" value="ABQ13649.1"/>
    <property type="molecule type" value="Genomic_DNA"/>
</dbReference>
<dbReference type="RefSeq" id="WP_012030812.1">
    <property type="nucleotide sequence ID" value="NC_009446.1"/>
</dbReference>
<dbReference type="SMR" id="A5EVR7"/>
<dbReference type="STRING" id="246195.DNO_0476"/>
<dbReference type="KEGG" id="dno:DNO_0476"/>
<dbReference type="eggNOG" id="COG0112">
    <property type="taxonomic scope" value="Bacteria"/>
</dbReference>
<dbReference type="HOGENOM" id="CLU_022477_2_1_6"/>
<dbReference type="OrthoDB" id="9803846at2"/>
<dbReference type="UniPathway" id="UPA00193"/>
<dbReference type="UniPathway" id="UPA00288">
    <property type="reaction ID" value="UER01023"/>
</dbReference>
<dbReference type="Proteomes" id="UP000000248">
    <property type="component" value="Chromosome"/>
</dbReference>
<dbReference type="GO" id="GO:0005829">
    <property type="term" value="C:cytosol"/>
    <property type="evidence" value="ECO:0007669"/>
    <property type="project" value="TreeGrafter"/>
</dbReference>
<dbReference type="GO" id="GO:0004372">
    <property type="term" value="F:glycine hydroxymethyltransferase activity"/>
    <property type="evidence" value="ECO:0007669"/>
    <property type="project" value="UniProtKB-UniRule"/>
</dbReference>
<dbReference type="GO" id="GO:0030170">
    <property type="term" value="F:pyridoxal phosphate binding"/>
    <property type="evidence" value="ECO:0007669"/>
    <property type="project" value="UniProtKB-UniRule"/>
</dbReference>
<dbReference type="GO" id="GO:0019264">
    <property type="term" value="P:glycine biosynthetic process from serine"/>
    <property type="evidence" value="ECO:0007669"/>
    <property type="project" value="UniProtKB-UniRule"/>
</dbReference>
<dbReference type="GO" id="GO:0035999">
    <property type="term" value="P:tetrahydrofolate interconversion"/>
    <property type="evidence" value="ECO:0007669"/>
    <property type="project" value="UniProtKB-UniRule"/>
</dbReference>
<dbReference type="CDD" id="cd00378">
    <property type="entry name" value="SHMT"/>
    <property type="match status" value="1"/>
</dbReference>
<dbReference type="FunFam" id="3.40.640.10:FF:000001">
    <property type="entry name" value="Serine hydroxymethyltransferase"/>
    <property type="match status" value="1"/>
</dbReference>
<dbReference type="FunFam" id="3.90.1150.10:FF:000003">
    <property type="entry name" value="Serine hydroxymethyltransferase"/>
    <property type="match status" value="1"/>
</dbReference>
<dbReference type="Gene3D" id="3.90.1150.10">
    <property type="entry name" value="Aspartate Aminotransferase, domain 1"/>
    <property type="match status" value="1"/>
</dbReference>
<dbReference type="Gene3D" id="3.40.640.10">
    <property type="entry name" value="Type I PLP-dependent aspartate aminotransferase-like (Major domain)"/>
    <property type="match status" value="1"/>
</dbReference>
<dbReference type="HAMAP" id="MF_00051">
    <property type="entry name" value="SHMT"/>
    <property type="match status" value="1"/>
</dbReference>
<dbReference type="InterPro" id="IPR015424">
    <property type="entry name" value="PyrdxlP-dep_Trfase"/>
</dbReference>
<dbReference type="InterPro" id="IPR015421">
    <property type="entry name" value="PyrdxlP-dep_Trfase_major"/>
</dbReference>
<dbReference type="InterPro" id="IPR015422">
    <property type="entry name" value="PyrdxlP-dep_Trfase_small"/>
</dbReference>
<dbReference type="InterPro" id="IPR001085">
    <property type="entry name" value="Ser_HO-MeTrfase"/>
</dbReference>
<dbReference type="InterPro" id="IPR049943">
    <property type="entry name" value="Ser_HO-MeTrfase-like"/>
</dbReference>
<dbReference type="InterPro" id="IPR019798">
    <property type="entry name" value="Ser_HO-MeTrfase_PLP_BS"/>
</dbReference>
<dbReference type="InterPro" id="IPR039429">
    <property type="entry name" value="SHMT-like_dom"/>
</dbReference>
<dbReference type="NCBIfam" id="NF000586">
    <property type="entry name" value="PRK00011.1"/>
    <property type="match status" value="1"/>
</dbReference>
<dbReference type="PANTHER" id="PTHR11680">
    <property type="entry name" value="SERINE HYDROXYMETHYLTRANSFERASE"/>
    <property type="match status" value="1"/>
</dbReference>
<dbReference type="PANTHER" id="PTHR11680:SF50">
    <property type="entry name" value="SERINE HYDROXYMETHYLTRANSFERASE"/>
    <property type="match status" value="1"/>
</dbReference>
<dbReference type="Pfam" id="PF00464">
    <property type="entry name" value="SHMT"/>
    <property type="match status" value="1"/>
</dbReference>
<dbReference type="PIRSF" id="PIRSF000412">
    <property type="entry name" value="SHMT"/>
    <property type="match status" value="1"/>
</dbReference>
<dbReference type="SUPFAM" id="SSF53383">
    <property type="entry name" value="PLP-dependent transferases"/>
    <property type="match status" value="1"/>
</dbReference>
<dbReference type="PROSITE" id="PS00096">
    <property type="entry name" value="SHMT"/>
    <property type="match status" value="1"/>
</dbReference>
<sequence>MFTKAMNIADFDNELAQAIADEATRQEDHIELIASENYCSPRVMEAQGSCLTNKYAEGYPRKRYYGGCEYVDIVEELAIARVKMLFAADYANVQPHSGSQANAAVFLALLEPGDTVLGMDLDHGGHLTHGSKVSFSGKTYNSIGYGIDDKGLIDYDAVAQLAEKHRPKMIIAGFSAYSQVLDFQRFREIADSVGAYLMVDMAHVAGLVAAGLYPNPVPFADVVTSTTHKTLRGPRGGIILAKANPTIEKKLNSAIFPGSQGGPLMHVIAAKAVAFKEALEPSFQKYQEQVVENAKTMAKVFIARGYDIVSGGTQNHLMLVSLINKGLTGKAANDALSRAHITVNKNSVPNDPQSPFVTSGIRIGTPAITTRGFGVNEVKKVANWICDVLDDIDNEEVILNVRNKVAELCAEFPVYGQ</sequence>
<reference key="1">
    <citation type="journal article" date="2007" name="Nat. Biotechnol.">
        <title>Genome sequence and identification of candidate vaccine antigens from the animal pathogen Dichelobacter nodosus.</title>
        <authorList>
            <person name="Myers G.S.A."/>
            <person name="Parker D."/>
            <person name="Al-Hasani K."/>
            <person name="Kennan R.M."/>
            <person name="Seemann T."/>
            <person name="Ren Q."/>
            <person name="Badger J.H."/>
            <person name="Selengut J.D."/>
            <person name="Deboy R.T."/>
            <person name="Tettelin H."/>
            <person name="Boyce J.D."/>
            <person name="McCarl V.P."/>
            <person name="Han X."/>
            <person name="Nelson W.C."/>
            <person name="Madupu R."/>
            <person name="Mohamoud Y."/>
            <person name="Holley T."/>
            <person name="Fedorova N."/>
            <person name="Khouri H."/>
            <person name="Bottomley S.P."/>
            <person name="Whittington R.J."/>
            <person name="Adler B."/>
            <person name="Songer J.G."/>
            <person name="Rood J.I."/>
            <person name="Paulsen I.T."/>
        </authorList>
    </citation>
    <scope>NUCLEOTIDE SEQUENCE [LARGE SCALE GENOMIC DNA]</scope>
    <source>
        <strain>VCS1703A</strain>
    </source>
</reference>
<comment type="function">
    <text evidence="1">Catalyzes the reversible interconversion of serine and glycine with tetrahydrofolate (THF) serving as the one-carbon carrier. This reaction serves as the major source of one-carbon groups required for the biosynthesis of purines, thymidylate, methionine, and other important biomolecules. Also exhibits THF-independent aldolase activity toward beta-hydroxyamino acids, producing glycine and aldehydes, via a retro-aldol mechanism.</text>
</comment>
<comment type="catalytic activity">
    <reaction evidence="1">
        <text>(6R)-5,10-methylene-5,6,7,8-tetrahydrofolate + glycine + H2O = (6S)-5,6,7,8-tetrahydrofolate + L-serine</text>
        <dbReference type="Rhea" id="RHEA:15481"/>
        <dbReference type="ChEBI" id="CHEBI:15377"/>
        <dbReference type="ChEBI" id="CHEBI:15636"/>
        <dbReference type="ChEBI" id="CHEBI:33384"/>
        <dbReference type="ChEBI" id="CHEBI:57305"/>
        <dbReference type="ChEBI" id="CHEBI:57453"/>
        <dbReference type="EC" id="2.1.2.1"/>
    </reaction>
</comment>
<comment type="cofactor">
    <cofactor evidence="1">
        <name>pyridoxal 5'-phosphate</name>
        <dbReference type="ChEBI" id="CHEBI:597326"/>
    </cofactor>
</comment>
<comment type="pathway">
    <text evidence="1">One-carbon metabolism; tetrahydrofolate interconversion.</text>
</comment>
<comment type="pathway">
    <text evidence="1">Amino-acid biosynthesis; glycine biosynthesis; glycine from L-serine: step 1/1.</text>
</comment>
<comment type="subunit">
    <text evidence="1">Homodimer.</text>
</comment>
<comment type="subcellular location">
    <subcellularLocation>
        <location evidence="1">Cytoplasm</location>
    </subcellularLocation>
</comment>
<comment type="similarity">
    <text evidence="1">Belongs to the SHMT family.</text>
</comment>
<organism>
    <name type="scientific">Dichelobacter nodosus (strain VCS1703A)</name>
    <dbReference type="NCBI Taxonomy" id="246195"/>
    <lineage>
        <taxon>Bacteria</taxon>
        <taxon>Pseudomonadati</taxon>
        <taxon>Pseudomonadota</taxon>
        <taxon>Gammaproteobacteria</taxon>
        <taxon>Cardiobacteriales</taxon>
        <taxon>Cardiobacteriaceae</taxon>
        <taxon>Dichelobacter</taxon>
    </lineage>
</organism>
<proteinExistence type="inferred from homology"/>
<accession>A5EVR7</accession>
<gene>
    <name evidence="1" type="primary">glyA</name>
    <name type="ordered locus">DNO_0476</name>
</gene>
<keyword id="KW-0028">Amino-acid biosynthesis</keyword>
<keyword id="KW-0963">Cytoplasm</keyword>
<keyword id="KW-0554">One-carbon metabolism</keyword>
<keyword id="KW-0663">Pyridoxal phosphate</keyword>
<keyword id="KW-1185">Reference proteome</keyword>
<keyword id="KW-0808">Transferase</keyword>
<evidence type="ECO:0000255" key="1">
    <source>
        <dbReference type="HAMAP-Rule" id="MF_00051"/>
    </source>
</evidence>
<name>GLYA_DICNV</name>
<feature type="chain" id="PRO_1000006245" description="Serine hydroxymethyltransferase">
    <location>
        <begin position="1"/>
        <end position="417"/>
    </location>
</feature>
<feature type="binding site" evidence="1">
    <location>
        <position position="121"/>
    </location>
    <ligand>
        <name>(6S)-5,6,7,8-tetrahydrofolate</name>
        <dbReference type="ChEBI" id="CHEBI:57453"/>
    </ligand>
</feature>
<feature type="binding site" evidence="1">
    <location>
        <begin position="125"/>
        <end position="127"/>
    </location>
    <ligand>
        <name>(6S)-5,6,7,8-tetrahydrofolate</name>
        <dbReference type="ChEBI" id="CHEBI:57453"/>
    </ligand>
</feature>
<feature type="binding site" evidence="1">
    <location>
        <begin position="354"/>
        <end position="356"/>
    </location>
    <ligand>
        <name>(6S)-5,6,7,8-tetrahydrofolate</name>
        <dbReference type="ChEBI" id="CHEBI:57453"/>
    </ligand>
</feature>
<feature type="site" description="Plays an important role in substrate specificity" evidence="1">
    <location>
        <position position="228"/>
    </location>
</feature>
<feature type="modified residue" description="N6-(pyridoxal phosphate)lysine" evidence="1">
    <location>
        <position position="229"/>
    </location>
</feature>
<protein>
    <recommendedName>
        <fullName evidence="1">Serine hydroxymethyltransferase</fullName>
        <shortName evidence="1">SHMT</shortName>
        <shortName evidence="1">Serine methylase</shortName>
        <ecNumber evidence="1">2.1.2.1</ecNumber>
    </recommendedName>
</protein>